<feature type="chain" id="PRO_0000286209" description="Spermidine/putrescine import ATP-binding protein PotA">
    <location>
        <begin position="1"/>
        <end position="349"/>
    </location>
</feature>
<feature type="domain" description="ABC transporter" evidence="1">
    <location>
        <begin position="7"/>
        <end position="237"/>
    </location>
</feature>
<feature type="binding site" evidence="1">
    <location>
        <begin position="39"/>
        <end position="46"/>
    </location>
    <ligand>
        <name>ATP</name>
        <dbReference type="ChEBI" id="CHEBI:30616"/>
    </ligand>
</feature>
<sequence>MKDNNIIELKGITKSYGKDTILDNLSLNIKKNEFLTLLGPSGCGKTTTLKIIAGFETADSGQVVFENNIINDIPPYERQLNTVFQKYALFPHMNVYENIAFGLKLKKIPKDIIDQKVKEMLKLVALEGYENRDIEALSGGQQQRVAIARALVNEPKVLLLDEPLGALDMKLRKEMQIELKKIQQKLGITFIFVTHDQEEALTMSDTIVVMNKGEIQQMGSPEDIYNEPANSFVAKFIGESNIVDGIMLDDFKVEFGGKIFDCVDKGFEKNEAIEVVIRPEDFEMVKYENGMLKGTVTSIIFKGVHYEIEVKNENHTWILHNTKHAEIGSKIGLSLDPESIHIMKKESDV</sequence>
<proteinExistence type="inferred from homology"/>
<keyword id="KW-0067">ATP-binding</keyword>
<keyword id="KW-1003">Cell membrane</keyword>
<keyword id="KW-0472">Membrane</keyword>
<keyword id="KW-0547">Nucleotide-binding</keyword>
<keyword id="KW-1278">Translocase</keyword>
<keyword id="KW-0813">Transport</keyword>
<gene>
    <name evidence="1" type="primary">potA</name>
    <name type="ordered locus">CPR_1935</name>
</gene>
<organism>
    <name type="scientific">Clostridium perfringens (strain SM101 / Type A)</name>
    <dbReference type="NCBI Taxonomy" id="289380"/>
    <lineage>
        <taxon>Bacteria</taxon>
        <taxon>Bacillati</taxon>
        <taxon>Bacillota</taxon>
        <taxon>Clostridia</taxon>
        <taxon>Eubacteriales</taxon>
        <taxon>Clostridiaceae</taxon>
        <taxon>Clostridium</taxon>
    </lineage>
</organism>
<comment type="function">
    <text evidence="1">Part of the ABC transporter complex PotABCD involved in spermidine/putrescine import. Responsible for energy coupling to the transport system.</text>
</comment>
<comment type="catalytic activity">
    <reaction evidence="1">
        <text>ATP + H2O + polyamine-[polyamine-binding protein]Side 1 = ADP + phosphate + polyamineSide 2 + [polyamine-binding protein]Side 1.</text>
        <dbReference type="EC" id="7.6.2.11"/>
    </reaction>
</comment>
<comment type="subunit">
    <text evidence="1">The complex is composed of two ATP-binding proteins (PotA), two transmembrane proteins (PotB and PotC) and a solute-binding protein (PotD).</text>
</comment>
<comment type="subcellular location">
    <subcellularLocation>
        <location evidence="1">Cell membrane</location>
        <topology evidence="1">Peripheral membrane protein</topology>
    </subcellularLocation>
</comment>
<comment type="similarity">
    <text evidence="1">Belongs to the ABC transporter superfamily. Spermidine/putrescine importer (TC 3.A.1.11.1) family.</text>
</comment>
<comment type="sequence caution" evidence="2">
    <conflict type="erroneous initiation">
        <sequence resource="EMBL-CDS" id="ABG87176"/>
    </conflict>
</comment>
<protein>
    <recommendedName>
        <fullName evidence="1">Spermidine/putrescine import ATP-binding protein PotA</fullName>
        <ecNumber evidence="1">7.6.2.11</ecNumber>
    </recommendedName>
</protein>
<reference key="1">
    <citation type="journal article" date="2006" name="Genome Res.">
        <title>Skewed genomic variability in strains of the toxigenic bacterial pathogen, Clostridium perfringens.</title>
        <authorList>
            <person name="Myers G.S.A."/>
            <person name="Rasko D.A."/>
            <person name="Cheung J.K."/>
            <person name="Ravel J."/>
            <person name="Seshadri R."/>
            <person name="DeBoy R.T."/>
            <person name="Ren Q."/>
            <person name="Varga J."/>
            <person name="Awad M.M."/>
            <person name="Brinkac L.M."/>
            <person name="Daugherty S.C."/>
            <person name="Haft D.H."/>
            <person name="Dodson R.J."/>
            <person name="Madupu R."/>
            <person name="Nelson W.C."/>
            <person name="Rosovitz M.J."/>
            <person name="Sullivan S.A."/>
            <person name="Khouri H."/>
            <person name="Dimitrov G.I."/>
            <person name="Watkins K.L."/>
            <person name="Mulligan S."/>
            <person name="Benton J."/>
            <person name="Radune D."/>
            <person name="Fisher D.J."/>
            <person name="Atkins H.S."/>
            <person name="Hiscox T."/>
            <person name="Jost B.H."/>
            <person name="Billington S.J."/>
            <person name="Songer J.G."/>
            <person name="McClane B.A."/>
            <person name="Titball R.W."/>
            <person name="Rood J.I."/>
            <person name="Melville S.B."/>
            <person name="Paulsen I.T."/>
        </authorList>
    </citation>
    <scope>NUCLEOTIDE SEQUENCE [LARGE SCALE GENOMIC DNA]</scope>
    <source>
        <strain>SM101 / Type A</strain>
    </source>
</reference>
<accession>Q0SRL2</accession>
<dbReference type="EC" id="7.6.2.11" evidence="1"/>
<dbReference type="EMBL" id="CP000312">
    <property type="protein sequence ID" value="ABG87176.1"/>
    <property type="status" value="ALT_INIT"/>
    <property type="molecule type" value="Genomic_DNA"/>
</dbReference>
<dbReference type="RefSeq" id="WP_045009245.1">
    <property type="nucleotide sequence ID" value="NC_008262.1"/>
</dbReference>
<dbReference type="SMR" id="Q0SRL2"/>
<dbReference type="KEGG" id="cpr:CPR_1935"/>
<dbReference type="Proteomes" id="UP000001824">
    <property type="component" value="Chromosome"/>
</dbReference>
<dbReference type="GO" id="GO:0043190">
    <property type="term" value="C:ATP-binding cassette (ABC) transporter complex"/>
    <property type="evidence" value="ECO:0007669"/>
    <property type="project" value="InterPro"/>
</dbReference>
<dbReference type="GO" id="GO:0015594">
    <property type="term" value="F:ABC-type putrescine transporter activity"/>
    <property type="evidence" value="ECO:0007669"/>
    <property type="project" value="InterPro"/>
</dbReference>
<dbReference type="GO" id="GO:0005524">
    <property type="term" value="F:ATP binding"/>
    <property type="evidence" value="ECO:0007669"/>
    <property type="project" value="UniProtKB-KW"/>
</dbReference>
<dbReference type="GO" id="GO:0016887">
    <property type="term" value="F:ATP hydrolysis activity"/>
    <property type="evidence" value="ECO:0007669"/>
    <property type="project" value="InterPro"/>
</dbReference>
<dbReference type="CDD" id="cd03300">
    <property type="entry name" value="ABC_PotA_N"/>
    <property type="match status" value="1"/>
</dbReference>
<dbReference type="FunFam" id="3.40.50.300:FF:000133">
    <property type="entry name" value="Spermidine/putrescine import ATP-binding protein PotA"/>
    <property type="match status" value="1"/>
</dbReference>
<dbReference type="Gene3D" id="2.40.50.100">
    <property type="match status" value="1"/>
</dbReference>
<dbReference type="Gene3D" id="2.40.50.140">
    <property type="entry name" value="Nucleic acid-binding proteins"/>
    <property type="match status" value="1"/>
</dbReference>
<dbReference type="Gene3D" id="3.40.50.300">
    <property type="entry name" value="P-loop containing nucleotide triphosphate hydrolases"/>
    <property type="match status" value="1"/>
</dbReference>
<dbReference type="InterPro" id="IPR003593">
    <property type="entry name" value="AAA+_ATPase"/>
</dbReference>
<dbReference type="InterPro" id="IPR050093">
    <property type="entry name" value="ABC_SmlMolc_Importer"/>
</dbReference>
<dbReference type="InterPro" id="IPR003439">
    <property type="entry name" value="ABC_transporter-like_ATP-bd"/>
</dbReference>
<dbReference type="InterPro" id="IPR017871">
    <property type="entry name" value="ABC_transporter-like_CS"/>
</dbReference>
<dbReference type="InterPro" id="IPR008995">
    <property type="entry name" value="Mo/tungstate-bd_C_term_dom"/>
</dbReference>
<dbReference type="InterPro" id="IPR012340">
    <property type="entry name" value="NA-bd_OB-fold"/>
</dbReference>
<dbReference type="InterPro" id="IPR027417">
    <property type="entry name" value="P-loop_NTPase"/>
</dbReference>
<dbReference type="InterPro" id="IPR005893">
    <property type="entry name" value="PotA-like"/>
</dbReference>
<dbReference type="InterPro" id="IPR017879">
    <property type="entry name" value="PotA_ATP-bd"/>
</dbReference>
<dbReference type="InterPro" id="IPR013611">
    <property type="entry name" value="Transp-assoc_OB_typ2"/>
</dbReference>
<dbReference type="NCBIfam" id="NF043075">
    <property type="entry name" value="MMSYN1_0197"/>
    <property type="match status" value="1"/>
</dbReference>
<dbReference type="NCBIfam" id="TIGR01187">
    <property type="entry name" value="potA"/>
    <property type="match status" value="1"/>
</dbReference>
<dbReference type="PANTHER" id="PTHR42781">
    <property type="entry name" value="SPERMIDINE/PUTRESCINE IMPORT ATP-BINDING PROTEIN POTA"/>
    <property type="match status" value="1"/>
</dbReference>
<dbReference type="PANTHER" id="PTHR42781:SF4">
    <property type="entry name" value="SPERMIDINE_PUTRESCINE IMPORT ATP-BINDING PROTEIN POTA"/>
    <property type="match status" value="1"/>
</dbReference>
<dbReference type="Pfam" id="PF00005">
    <property type="entry name" value="ABC_tran"/>
    <property type="match status" value="1"/>
</dbReference>
<dbReference type="Pfam" id="PF08402">
    <property type="entry name" value="TOBE_2"/>
    <property type="match status" value="1"/>
</dbReference>
<dbReference type="SMART" id="SM00382">
    <property type="entry name" value="AAA"/>
    <property type="match status" value="1"/>
</dbReference>
<dbReference type="SUPFAM" id="SSF50331">
    <property type="entry name" value="MOP-like"/>
    <property type="match status" value="1"/>
</dbReference>
<dbReference type="SUPFAM" id="SSF52540">
    <property type="entry name" value="P-loop containing nucleoside triphosphate hydrolases"/>
    <property type="match status" value="1"/>
</dbReference>
<dbReference type="PROSITE" id="PS00211">
    <property type="entry name" value="ABC_TRANSPORTER_1"/>
    <property type="match status" value="1"/>
</dbReference>
<dbReference type="PROSITE" id="PS50893">
    <property type="entry name" value="ABC_TRANSPORTER_2"/>
    <property type="match status" value="1"/>
</dbReference>
<dbReference type="PROSITE" id="PS51305">
    <property type="entry name" value="POTA"/>
    <property type="match status" value="1"/>
</dbReference>
<name>POTA_CLOPS</name>
<evidence type="ECO:0000255" key="1">
    <source>
        <dbReference type="HAMAP-Rule" id="MF_01726"/>
    </source>
</evidence>
<evidence type="ECO:0000305" key="2"/>